<dbReference type="EMBL" id="AB046054">
    <property type="protein sequence ID" value="BAB01636.1"/>
    <property type="status" value="ALT_INIT"/>
    <property type="molecule type" value="mRNA"/>
</dbReference>
<dbReference type="SMR" id="Q9N077"/>
<dbReference type="STRING" id="9541.ENSMFAP00000035224"/>
<dbReference type="eggNOG" id="ENOG502QQF4">
    <property type="taxonomic scope" value="Eukaryota"/>
</dbReference>
<dbReference type="Proteomes" id="UP000233100">
    <property type="component" value="Unplaced"/>
</dbReference>
<dbReference type="GO" id="GO:0005634">
    <property type="term" value="C:nucleus"/>
    <property type="evidence" value="ECO:0007669"/>
    <property type="project" value="UniProtKB-SubCell"/>
</dbReference>
<dbReference type="GO" id="GO:0070530">
    <property type="term" value="F:K63-linked polyubiquitin modification-dependent protein binding"/>
    <property type="evidence" value="ECO:0000250"/>
    <property type="project" value="UniProtKB"/>
</dbReference>
<dbReference type="GO" id="GO:0000077">
    <property type="term" value="P:DNA damage checkpoint signaling"/>
    <property type="evidence" value="ECO:0007669"/>
    <property type="project" value="InterPro"/>
</dbReference>
<dbReference type="GO" id="GO:0006281">
    <property type="term" value="P:DNA repair"/>
    <property type="evidence" value="ECO:0007669"/>
    <property type="project" value="UniProtKB-KW"/>
</dbReference>
<dbReference type="InterPro" id="IPR033349">
    <property type="entry name" value="ATRIP"/>
</dbReference>
<dbReference type="PANTHER" id="PTHR28594">
    <property type="entry name" value="ATR-INTERACTING PROTEIN"/>
    <property type="match status" value="1"/>
</dbReference>
<dbReference type="PANTHER" id="PTHR28594:SF1">
    <property type="entry name" value="ATR-INTERACTING PROTEIN"/>
    <property type="match status" value="1"/>
</dbReference>
<sequence length="655" mass="71383">LIKNGEIKILRDSLHQTESVLEEQRRSHFLLEQEKTQALSDKEKEFSKKLQSLQSELQFKDAEMNELRTKLQTSERANKLAAPSVSHVSPRKNPSVVIKPEACSPQFGKTSFPTKESFSANMSLPHPCQTESGYKPLVGREDSKTHSLRGDSIKQEEAQKSFVDSWRQRSNTQGSILINLLLKQPLIPGSSLSLCHLLSSSSESPAGTPLQPPGFGSTLAGMSGLRTTGSQDGSFSLSALREAQNLAFTGLNLVARNECSRDGDPAEGGRRAFPLCQLPGAVHFLPLVQFFIGLHCQALQDLAAAKRSGAPGDSPTHSSRVSSGVETNPEDSVRILEGFSVTALSILQHLVCHSGAVVSLLLSRVGADSAAGEGNGSLVHRFSDGDMTSAPRGVADDQGQHPLLKMLLHLLAFSSAATGHLQASVLTQCLKVLVKLAENTSSDFLPRFQCVFQVLPKCLSPETPLPGMVLAVELLSLLADHDQLAPQLCSHSDCLLLLLYMYITSRPDRVASETQWLQLEQEVVWLLSKLGVQSPLPLVTGSNCQCNVEVVRALTVMLHRQWLTVRRAGGPPRTDQQRRTVRCLRDTVLLLHGLSQKDKLFIMHCVEVLHQYDQVMPGVSMLIRGLPDVTDCEEAALDDLCAAETDVDDPELECG</sequence>
<accession>Q9N077</accession>
<keyword id="KW-0175">Coiled coil</keyword>
<keyword id="KW-0227">DNA damage</keyword>
<keyword id="KW-0234">DNA repair</keyword>
<keyword id="KW-0539">Nucleus</keyword>
<keyword id="KW-0597">Phosphoprotein</keyword>
<keyword id="KW-1185">Reference proteome</keyword>
<evidence type="ECO:0000250" key="1"/>
<evidence type="ECO:0000255" key="2"/>
<evidence type="ECO:0000256" key="3">
    <source>
        <dbReference type="SAM" id="MobiDB-lite"/>
    </source>
</evidence>
<evidence type="ECO:0000305" key="4"/>
<gene>
    <name type="primary">ATRIP</name>
    <name type="ORF">QccE-12377</name>
</gene>
<reference key="1">
    <citation type="submission" date="2000-07" db="EMBL/GenBank/DDBJ databases">
        <title>Isolation of full-length cDNA clones from macaque brain cDNA libraries.</title>
        <authorList>
            <person name="Osada N."/>
            <person name="Hida M."/>
            <person name="Kusuda J."/>
            <person name="Tanuma R."/>
            <person name="Iseki K."/>
            <person name="Hirai M."/>
            <person name="Terao K."/>
            <person name="Suzuki Y."/>
            <person name="Sugano S."/>
            <person name="Hashimoto K."/>
        </authorList>
    </citation>
    <scope>NUCLEOTIDE SEQUENCE [LARGE SCALE MRNA]</scope>
    <source>
        <tissue>Brain cortex</tissue>
    </source>
</reference>
<feature type="chain" id="PRO_0000064741" description="ATR-interacting protein">
    <location>
        <begin position="1" status="less than"/>
        <end position="655"/>
    </location>
</feature>
<feature type="region of interest" description="Disordered" evidence="3">
    <location>
        <begin position="120"/>
        <end position="157"/>
    </location>
</feature>
<feature type="region of interest" description="Disordered" evidence="3">
    <location>
        <begin position="307"/>
        <end position="327"/>
    </location>
</feature>
<feature type="coiled-coil region" evidence="2">
    <location>
        <begin position="6"/>
        <end position="82"/>
    </location>
</feature>
<feature type="short sequence motif" description="EEXXXDL motif">
    <location>
        <begin position="633"/>
        <end position="640"/>
    </location>
</feature>
<feature type="compositionally biased region" description="Basic and acidic residues" evidence="3">
    <location>
        <begin position="138"/>
        <end position="157"/>
    </location>
</feature>
<feature type="compositionally biased region" description="Polar residues" evidence="3">
    <location>
        <begin position="315"/>
        <end position="326"/>
    </location>
</feature>
<feature type="non-terminal residue">
    <location>
        <position position="1"/>
    </location>
</feature>
<comment type="function">
    <text evidence="1">Required for checkpoint signaling after DNA damage. Required for ATR expression, possibly by stabilizing the protein (By similarity).</text>
</comment>
<comment type="subunit">
    <text evidence="1">Heterodimer with ATR. The heterodimer binds the RPA complex and is then recruited to single-stranded DNA. Interacts with CEP164 (via N-terminus). Interacts with CINP (By similarity). Interacts with ATR (By similarity).</text>
</comment>
<comment type="subcellular location">
    <subcellularLocation>
        <location evidence="1">Nucleus</location>
    </subcellularLocation>
    <text evidence="1">Redistributes to discrete nuclear foci upon DNA damage.</text>
</comment>
<comment type="domain">
    <text evidence="1">The EEXXXDDL motif is required for the interaction with catalytic subunit PRKDC and its recruitment to sites of DNA damage.</text>
</comment>
<comment type="PTM">
    <text evidence="1">Phosphorylated by ATR.</text>
</comment>
<comment type="similarity">
    <text evidence="4">Belongs to the ATRIP family.</text>
</comment>
<comment type="sequence caution" evidence="4">
    <conflict type="erroneous initiation">
        <sequence resource="EMBL-CDS" id="BAB01636"/>
    </conflict>
</comment>
<proteinExistence type="evidence at transcript level"/>
<organism>
    <name type="scientific">Macaca fascicularis</name>
    <name type="common">Crab-eating macaque</name>
    <name type="synonym">Cynomolgus monkey</name>
    <dbReference type="NCBI Taxonomy" id="9541"/>
    <lineage>
        <taxon>Eukaryota</taxon>
        <taxon>Metazoa</taxon>
        <taxon>Chordata</taxon>
        <taxon>Craniata</taxon>
        <taxon>Vertebrata</taxon>
        <taxon>Euteleostomi</taxon>
        <taxon>Mammalia</taxon>
        <taxon>Eutheria</taxon>
        <taxon>Euarchontoglires</taxon>
        <taxon>Primates</taxon>
        <taxon>Haplorrhini</taxon>
        <taxon>Catarrhini</taxon>
        <taxon>Cercopithecidae</taxon>
        <taxon>Cercopithecinae</taxon>
        <taxon>Macaca</taxon>
    </lineage>
</organism>
<protein>
    <recommendedName>
        <fullName>ATR-interacting protein</fullName>
    </recommendedName>
    <alternativeName>
        <fullName>ATM and Rad3-related-interacting protein</fullName>
    </alternativeName>
</protein>
<name>ATRIP_MACFA</name>